<keyword id="KW-0175">Coiled coil</keyword>
<keyword id="KW-0456">Lyase</keyword>
<keyword id="KW-1185">Reference proteome</keyword>
<keyword id="KW-0677">Repeat</keyword>
<keyword id="KW-0802">TPR repeat</keyword>
<organism>
    <name type="scientific">Bacillus subtilis (strain 168)</name>
    <dbReference type="NCBI Taxonomy" id="224308"/>
    <lineage>
        <taxon>Bacteria</taxon>
        <taxon>Bacillati</taxon>
        <taxon>Bacillota</taxon>
        <taxon>Bacilli</taxon>
        <taxon>Bacillales</taxon>
        <taxon>Bacillaceae</taxon>
        <taxon>Bacillus</taxon>
    </lineage>
</organism>
<comment type="similarity">
    <text evidence="4">Belongs to the transglycosylase Slt family.</text>
</comment>
<evidence type="ECO:0000255" key="1"/>
<evidence type="ECO:0000255" key="2">
    <source>
        <dbReference type="PROSITE-ProRule" id="PRU10071"/>
    </source>
</evidence>
<evidence type="ECO:0000256" key="3">
    <source>
        <dbReference type="SAM" id="MobiDB-lite"/>
    </source>
</evidence>
<evidence type="ECO:0000305" key="4"/>
<reference key="1">
    <citation type="journal article" date="1997" name="Nature">
        <title>The complete genome sequence of the Gram-positive bacterium Bacillus subtilis.</title>
        <authorList>
            <person name="Kunst F."/>
            <person name="Ogasawara N."/>
            <person name="Moszer I."/>
            <person name="Albertini A.M."/>
            <person name="Alloni G."/>
            <person name="Azevedo V."/>
            <person name="Bertero M.G."/>
            <person name="Bessieres P."/>
            <person name="Bolotin A."/>
            <person name="Borchert S."/>
            <person name="Borriss R."/>
            <person name="Boursier L."/>
            <person name="Brans A."/>
            <person name="Braun M."/>
            <person name="Brignell S.C."/>
            <person name="Bron S."/>
            <person name="Brouillet S."/>
            <person name="Bruschi C.V."/>
            <person name="Caldwell B."/>
            <person name="Capuano V."/>
            <person name="Carter N.M."/>
            <person name="Choi S.-K."/>
            <person name="Codani J.-J."/>
            <person name="Connerton I.F."/>
            <person name="Cummings N.J."/>
            <person name="Daniel R.A."/>
            <person name="Denizot F."/>
            <person name="Devine K.M."/>
            <person name="Duesterhoeft A."/>
            <person name="Ehrlich S.D."/>
            <person name="Emmerson P.T."/>
            <person name="Entian K.-D."/>
            <person name="Errington J."/>
            <person name="Fabret C."/>
            <person name="Ferrari E."/>
            <person name="Foulger D."/>
            <person name="Fritz C."/>
            <person name="Fujita M."/>
            <person name="Fujita Y."/>
            <person name="Fuma S."/>
            <person name="Galizzi A."/>
            <person name="Galleron N."/>
            <person name="Ghim S.-Y."/>
            <person name="Glaser P."/>
            <person name="Goffeau A."/>
            <person name="Golightly E.J."/>
            <person name="Grandi G."/>
            <person name="Guiseppi G."/>
            <person name="Guy B.J."/>
            <person name="Haga K."/>
            <person name="Haiech J."/>
            <person name="Harwood C.R."/>
            <person name="Henaut A."/>
            <person name="Hilbert H."/>
            <person name="Holsappel S."/>
            <person name="Hosono S."/>
            <person name="Hullo M.-F."/>
            <person name="Itaya M."/>
            <person name="Jones L.-M."/>
            <person name="Joris B."/>
            <person name="Karamata D."/>
            <person name="Kasahara Y."/>
            <person name="Klaerr-Blanchard M."/>
            <person name="Klein C."/>
            <person name="Kobayashi Y."/>
            <person name="Koetter P."/>
            <person name="Koningstein G."/>
            <person name="Krogh S."/>
            <person name="Kumano M."/>
            <person name="Kurita K."/>
            <person name="Lapidus A."/>
            <person name="Lardinois S."/>
            <person name="Lauber J."/>
            <person name="Lazarevic V."/>
            <person name="Lee S.-M."/>
            <person name="Levine A."/>
            <person name="Liu H."/>
            <person name="Masuda S."/>
            <person name="Mauel C."/>
            <person name="Medigue C."/>
            <person name="Medina N."/>
            <person name="Mellado R.P."/>
            <person name="Mizuno M."/>
            <person name="Moestl D."/>
            <person name="Nakai S."/>
            <person name="Noback M."/>
            <person name="Noone D."/>
            <person name="O'Reilly M."/>
            <person name="Ogawa K."/>
            <person name="Ogiwara A."/>
            <person name="Oudega B."/>
            <person name="Park S.-H."/>
            <person name="Parro V."/>
            <person name="Pohl T.M."/>
            <person name="Portetelle D."/>
            <person name="Porwollik S."/>
            <person name="Prescott A.M."/>
            <person name="Presecan E."/>
            <person name="Pujic P."/>
            <person name="Purnelle B."/>
            <person name="Rapoport G."/>
            <person name="Rey M."/>
            <person name="Reynolds S."/>
            <person name="Rieger M."/>
            <person name="Rivolta C."/>
            <person name="Rocha E."/>
            <person name="Roche B."/>
            <person name="Rose M."/>
            <person name="Sadaie Y."/>
            <person name="Sato T."/>
            <person name="Scanlan E."/>
            <person name="Schleich S."/>
            <person name="Schroeter R."/>
            <person name="Scoffone F."/>
            <person name="Sekiguchi J."/>
            <person name="Sekowska A."/>
            <person name="Seror S.J."/>
            <person name="Serror P."/>
            <person name="Shin B.-S."/>
            <person name="Soldo B."/>
            <person name="Sorokin A."/>
            <person name="Tacconi E."/>
            <person name="Takagi T."/>
            <person name="Takahashi H."/>
            <person name="Takemaru K."/>
            <person name="Takeuchi M."/>
            <person name="Tamakoshi A."/>
            <person name="Tanaka T."/>
            <person name="Terpstra P."/>
            <person name="Tognoni A."/>
            <person name="Tosato V."/>
            <person name="Uchiyama S."/>
            <person name="Vandenbol M."/>
            <person name="Vannier F."/>
            <person name="Vassarotti A."/>
            <person name="Viari A."/>
            <person name="Wambutt R."/>
            <person name="Wedler E."/>
            <person name="Wedler H."/>
            <person name="Weitzenegger T."/>
            <person name="Winters P."/>
            <person name="Wipat A."/>
            <person name="Yamamoto H."/>
            <person name="Yamane K."/>
            <person name="Yasumoto K."/>
            <person name="Yata K."/>
            <person name="Yoshida K."/>
            <person name="Yoshikawa H.-F."/>
            <person name="Zumstein E."/>
            <person name="Yoshikawa H."/>
            <person name="Danchin A."/>
        </authorList>
    </citation>
    <scope>NUCLEOTIDE SEQUENCE [LARGE SCALE GENOMIC DNA]</scope>
    <source>
        <strain>168</strain>
    </source>
</reference>
<reference key="2">
    <citation type="journal article" date="2009" name="Microbiology">
        <title>From a consortium sequence to a unified sequence: the Bacillus subtilis 168 reference genome a decade later.</title>
        <authorList>
            <person name="Barbe V."/>
            <person name="Cruveiller S."/>
            <person name="Kunst F."/>
            <person name="Lenoble P."/>
            <person name="Meurice G."/>
            <person name="Sekowska A."/>
            <person name="Vallenet D."/>
            <person name="Wang T."/>
            <person name="Moszer I."/>
            <person name="Medigue C."/>
            <person name="Danchin A."/>
        </authorList>
    </citation>
    <scope>SEQUENCE REVISION TO 1916-1917</scope>
</reference>
<dbReference type="EC" id="4.2.2.-"/>
<dbReference type="EMBL" id="AL009126">
    <property type="protein sequence ID" value="CAB14053.2"/>
    <property type="molecule type" value="Genomic_DNA"/>
</dbReference>
<dbReference type="SMR" id="O31976"/>
<dbReference type="FunCoup" id="O31976">
    <property type="interactions" value="27"/>
</dbReference>
<dbReference type="IntAct" id="O31976">
    <property type="interactions" value="1"/>
</dbReference>
<dbReference type="STRING" id="224308.BSU21350"/>
<dbReference type="CAZy" id="GH23">
    <property type="family name" value="Glycoside Hydrolase Family 23"/>
</dbReference>
<dbReference type="MEROPS" id="M23.A04"/>
<dbReference type="jPOST" id="O31976"/>
<dbReference type="PaxDb" id="224308-BSU21350"/>
<dbReference type="EnsemblBacteria" id="CAB14053">
    <property type="protein sequence ID" value="CAB14053"/>
    <property type="gene ID" value="BSU_21350"/>
</dbReference>
<dbReference type="GeneID" id="939138"/>
<dbReference type="KEGG" id="bsu:BSU21350"/>
<dbReference type="PATRIC" id="fig|224308.179.peg.2331"/>
<dbReference type="eggNOG" id="COG0739">
    <property type="taxonomic scope" value="Bacteria"/>
</dbReference>
<dbReference type="eggNOG" id="COG0741">
    <property type="taxonomic scope" value="Bacteria"/>
</dbReference>
<dbReference type="eggNOG" id="COG1196">
    <property type="taxonomic scope" value="Bacteria"/>
</dbReference>
<dbReference type="InParanoid" id="O31976"/>
<dbReference type="OrthoDB" id="5902884at2"/>
<dbReference type="BioCyc" id="BSUB:BSU21350-MONOMER"/>
<dbReference type="Proteomes" id="UP000001570">
    <property type="component" value="Chromosome"/>
</dbReference>
<dbReference type="GO" id="GO:0016020">
    <property type="term" value="C:membrane"/>
    <property type="evidence" value="ECO:0007669"/>
    <property type="project" value="InterPro"/>
</dbReference>
<dbReference type="GO" id="GO:0004222">
    <property type="term" value="F:metalloendopeptidase activity"/>
    <property type="evidence" value="ECO:0000318"/>
    <property type="project" value="GO_Central"/>
</dbReference>
<dbReference type="GO" id="GO:0008933">
    <property type="term" value="F:peptidoglycan lytic transglycosylase activity"/>
    <property type="evidence" value="ECO:0007669"/>
    <property type="project" value="InterPro"/>
</dbReference>
<dbReference type="GO" id="GO:0000270">
    <property type="term" value="P:peptidoglycan metabolic process"/>
    <property type="evidence" value="ECO:0007669"/>
    <property type="project" value="InterPro"/>
</dbReference>
<dbReference type="CDD" id="cd00254">
    <property type="entry name" value="LT-like"/>
    <property type="match status" value="1"/>
</dbReference>
<dbReference type="CDD" id="cd12797">
    <property type="entry name" value="M23_peptidase"/>
    <property type="match status" value="1"/>
</dbReference>
<dbReference type="Gene3D" id="1.10.530.10">
    <property type="match status" value="1"/>
</dbReference>
<dbReference type="Gene3D" id="1.20.5.300">
    <property type="match status" value="1"/>
</dbReference>
<dbReference type="Gene3D" id="2.70.70.10">
    <property type="entry name" value="Glucose Permease (Domain IIA)"/>
    <property type="match status" value="1"/>
</dbReference>
<dbReference type="InterPro" id="IPR011055">
    <property type="entry name" value="Dup_hybrid_motif"/>
</dbReference>
<dbReference type="InterPro" id="IPR023346">
    <property type="entry name" value="Lysozyme-like_dom_sf"/>
</dbReference>
<dbReference type="InterPro" id="IPR016047">
    <property type="entry name" value="Peptidase_M23"/>
</dbReference>
<dbReference type="InterPro" id="IPR010090">
    <property type="entry name" value="Phage_tape_meas"/>
</dbReference>
<dbReference type="InterPro" id="IPR000189">
    <property type="entry name" value="Transglyc_AS"/>
</dbReference>
<dbReference type="InterPro" id="IPR008258">
    <property type="entry name" value="Transglycosylase_SLT_dom_1"/>
</dbReference>
<dbReference type="NCBIfam" id="TIGR01760">
    <property type="entry name" value="tape_meas_TP901"/>
    <property type="match status" value="1"/>
</dbReference>
<dbReference type="PANTHER" id="PTHR37423:SF2">
    <property type="entry name" value="MEMBRANE-BOUND LYTIC MUREIN TRANSGLYCOSYLASE C"/>
    <property type="match status" value="1"/>
</dbReference>
<dbReference type="PANTHER" id="PTHR37423">
    <property type="entry name" value="SOLUBLE LYTIC MUREIN TRANSGLYCOSYLASE-RELATED"/>
    <property type="match status" value="1"/>
</dbReference>
<dbReference type="Pfam" id="PF01551">
    <property type="entry name" value="Peptidase_M23"/>
    <property type="match status" value="1"/>
</dbReference>
<dbReference type="Pfam" id="PF10145">
    <property type="entry name" value="PhageMin_Tail"/>
    <property type="match status" value="1"/>
</dbReference>
<dbReference type="Pfam" id="PF01464">
    <property type="entry name" value="SLT"/>
    <property type="match status" value="1"/>
</dbReference>
<dbReference type="SUPFAM" id="SSF51261">
    <property type="entry name" value="Duplicated hybrid motif"/>
    <property type="match status" value="1"/>
</dbReference>
<dbReference type="SUPFAM" id="SSF53955">
    <property type="entry name" value="Lysozyme-like"/>
    <property type="match status" value="1"/>
</dbReference>
<dbReference type="PROSITE" id="PS00922">
    <property type="entry name" value="TRANSGLYCOSYLASE"/>
    <property type="match status" value="1"/>
</dbReference>
<gene>
    <name type="primary">yomI</name>
    <name type="ordered locus">BSU21350</name>
</gene>
<proteinExistence type="inferred from homology"/>
<protein>
    <recommendedName>
        <fullName>SPbeta prophage-derived uncharacterized transglycosylase YomI</fullName>
        <ecNumber>4.2.2.-</ecNumber>
    </recommendedName>
</protein>
<accession>O31976</accession>
<feature type="chain" id="PRO_0000360831" description="SPbeta prophage-derived uncharacterized transglycosylase YomI">
    <location>
        <begin position="1"/>
        <end position="2285"/>
    </location>
</feature>
<feature type="repeat" description="TPR 1">
    <location>
        <begin position="37"/>
        <end position="71"/>
    </location>
</feature>
<feature type="repeat" description="TPR 2">
    <location>
        <begin position="231"/>
        <end position="264"/>
    </location>
</feature>
<feature type="repeat" description="TPR 3">
    <location>
        <begin position="519"/>
        <end position="553"/>
    </location>
</feature>
<feature type="repeat" description="TPR 4">
    <location>
        <begin position="609"/>
        <end position="642"/>
    </location>
</feature>
<feature type="repeat" description="TPR 5">
    <location>
        <begin position="837"/>
        <end position="871"/>
    </location>
</feature>
<feature type="repeat" description="TPR 6">
    <location>
        <begin position="1079"/>
        <end position="1112"/>
    </location>
</feature>
<feature type="repeat" description="TPR 7">
    <location>
        <begin position="1317"/>
        <end position="1350"/>
    </location>
</feature>
<feature type="repeat" description="TPR 8">
    <location>
        <begin position="1484"/>
        <end position="1517"/>
    </location>
</feature>
<feature type="repeat" description="TPR 9">
    <location>
        <begin position="1719"/>
        <end position="1752"/>
    </location>
</feature>
<feature type="repeat" description="TPR 10">
    <location>
        <begin position="1851"/>
        <end position="1884"/>
    </location>
</feature>
<feature type="region of interest" description="Disordered" evidence="3">
    <location>
        <begin position="138"/>
        <end position="180"/>
    </location>
</feature>
<feature type="region of interest" description="Transglycosylase">
    <location>
        <begin position="1426"/>
        <end position="1660"/>
    </location>
</feature>
<feature type="coiled-coil region" evidence="1">
    <location>
        <begin position="985"/>
        <end position="1030"/>
    </location>
</feature>
<feature type="coiled-coil region" evidence="1">
    <location>
        <begin position="1219"/>
        <end position="1262"/>
    </location>
</feature>
<feature type="coiled-coil region" evidence="1">
    <location>
        <begin position="1790"/>
        <end position="1837"/>
    </location>
</feature>
<feature type="coiled-coil region" evidence="1">
    <location>
        <begin position="1963"/>
        <end position="2074"/>
    </location>
</feature>
<feature type="compositionally biased region" description="Polar residues" evidence="3">
    <location>
        <begin position="138"/>
        <end position="151"/>
    </location>
</feature>
<feature type="compositionally biased region" description="Low complexity" evidence="3">
    <location>
        <begin position="164"/>
        <end position="179"/>
    </location>
</feature>
<feature type="active site" evidence="2">
    <location>
        <position position="1447"/>
    </location>
</feature>
<sequence length="2285" mass="252295">MSQNLKIILTPQADTSSKTVEQLNQQIKSLEKKLNSLKLNTNIDSTTLKALQEFSSAIDTYQKNLKSYNQTVKETSTVIKNADGSVEKLTQQYKKNGEILQRETKIINNRNTALKQETQEVNKLTQATEKLGQVQKKTVQRNLQGQPTKVVQKNRHGFDDIVYTTDPKTNSTSSKTTTNYDQQRRAIEQLKQDLEKLRQQGIVTDTTISSLGRKINTAQSAQQIEALQNRIRMLDDKSAAVAKNNELKKTIELYQRQAQVNVQNLNTRYGSSMGSSNRQAVQDYLNAVNSLNVSTGSNNIRSQIQSLNMQFRELASNAQTAANQASSFGAELTQTFKSMSTYLISGSLFYGAISGLKEMVSQAIEIDTLMTNIRRVMNEPDYKYNELLQESIDLGDTLSNKITDILQMTGDFGRMGFDESELSTLTKTAQVLQNVSDLTPDDTVNTLTAAMLNFNIAANDSISIADKLNEVDNNYAVTTLDLANSIRKAGSTASTFGVELNDLIGYTTAIASTTRESGNIVGNSLKTIFARIGNNQSSIKALEQIGISVKTAGGEAKSASDLISEVAGKWDTLSDAQKQNTSIGVAGIYQLSRFNAMMNNFSIAQNAAKTAANSTGSAWSEQQKYADSLQARVNKLQNNFTEFAIAASDAFISDGLIEFTQAAGSLLNASTGVIKSVGFLPPLLAAVSTATLLLSKNTRTLASSLILGTRAMGQETLATAGLEAGMTRAAVASRVLKTALRGLLVSTLVGGAFAALGWALESLISSFAEAKKAKDDFEQSQQTNVEAITTNKDSTDKLIQQYKELQKVKESRSLTSDEEQEYLQVTQQLAQTFPALVKGYDSQGNAILKTNKELEKAIENTKEYLALKKQETRDSAKKTFEDASKEIKKSKDELKQYKQIADYNDKGRPKWDLIADDDDYKVAADKAKQSMLKAQSDIESGNAKVKDSVLSIANAYSSIDISNTLKTSISDVVNKLNLKDDLDPEELEKFSSSLGKLQEKMQKALDSGDEKAFDNAKKDLQSLLETYSKSDSSIDVFKMSFDKAQKNIKDGDKSLSSVKSEVGDLGETLAEAGNEAEDFGKKLKEALDANSVDDIKAAIKEMSDAMQFDSVQDVLNGDIFNNTKDQVAPLNDLLEKMAEGKSISANEANTLIQKDKELAQAISIENGVVKINRDEVIKQRKVKLDAYNDMVTYSNKLMKTEVNNAIKTLNADTLRIDSLKKLRKERKLDMSEAELSDLEVKSINNVADAKKELKKLEEKMLQPGGYSNSQIEAMQSVKSALESYISASEEATSTQEMNKQALVEAGTSLENWTDQQEKANEETKTSMYVVDKYKEALEKVNAEIDKYNKQVNDYPKYSQKYRDAIKKEIKALQQKKKLMQEQAKLLKDQIKSGNITQYGIVTSTTSSGGTPSSTGGSYSGKYSSYINSAASKYNVDPALIAAVIQQESGFNAKARSGVGAMGLMQLMPATAKSLGVNNAYDPYQNVMGGTKYLAQQLEKFGGNVEKALAAYNAGPGNVIKYGGIPPFKETQNYVKKIMANYSKSLSSATSSIASYYTNNSAFRVSSKYGQQESGLRSSPHKGTDFAAKAGTAIKSLQSGKVQIAGYSKTAGNWVVIKQDDGTVAKYMHMLNTPSVKAGQSVKAGQTIGKVGSTGNSTGNHLHLQIEQNGKTIDPEKYMQGIGTSISDASQAEAERQQGIAQAKSDLLSLQGDISSVNDQIQELQYELVQSKLDEFDKRIGDFDVRIAKDESMANRYTSDSKEFRKYTSDQKKAVAEQAKIQQQKVNWIQKEIKTNKALNSAQRAQLQEELKQAKLDLISVQDQVRELQKQLVQSKVDETLKSIEKSSSKTQGKIKDVDNKISMTEEDEDKVKYYSKQIKLIQQQQKEAKKYIKQLEEQKKAAKGFPDIQEQITEEIENWKDKQKDFNLELYNTKKSIKDIYKSLADEVVSIYKEMYEKMRDIELEAHQKATQDLIDEIDKTDDEAKFQKELKERQDSIQKLTDQINQYSLDDSEFGKSKVKELTEQLQKEQLDLDDFLKDRESNKRKEALQDQLEKDEESINNKYDNLVNDERAFKKLEDKIMNGKITDIAKQLNEFSKFINTNMESIGKSISNNLIDKLKEASNALNTAVKGNTTGKKVSSFASGGYTGTGLGAGKLAFLHDKELILNKTDTANILDTVKAVRETAVDDSPKWGQGVKLADLIKKGITSIPSLVPNVNQSMLTNSLIPNLKKIEIPSKTIASSGDKTINLTNTFHIDKLIGGESGARSMFESIKNEVVKLNGSM</sequence>
<name>YOMI_BACSU</name>